<dbReference type="EC" id="3.4.19.12" evidence="5"/>
<dbReference type="EMBL" id="Z46676">
    <property type="protein sequence ID" value="CAA86665.2"/>
    <property type="molecule type" value="Genomic_DNA"/>
</dbReference>
<dbReference type="PIR" id="T19070">
    <property type="entry name" value="T19070"/>
</dbReference>
<dbReference type="RefSeq" id="NP_001379065.1">
    <property type="nucleotide sequence ID" value="NM_001393132.1"/>
</dbReference>
<dbReference type="RefSeq" id="NP_495684.2">
    <property type="nucleotide sequence ID" value="NM_063283.4"/>
</dbReference>
<dbReference type="SMR" id="Q09444"/>
<dbReference type="BioGRID" id="39621">
    <property type="interactions" value="10"/>
</dbReference>
<dbReference type="DIP" id="DIP-26660N"/>
<dbReference type="FunCoup" id="Q09444">
    <property type="interactions" value="3142"/>
</dbReference>
<dbReference type="IntAct" id="Q09444">
    <property type="interactions" value="1"/>
</dbReference>
<dbReference type="STRING" id="6239.C08B11.7.1"/>
<dbReference type="MEROPS" id="C12.005"/>
<dbReference type="PaxDb" id="6239-C08B11.7"/>
<dbReference type="PeptideAtlas" id="Q09444"/>
<dbReference type="EnsemblMetazoa" id="C08B11.7.1">
    <property type="protein sequence ID" value="C08B11.7.1"/>
    <property type="gene ID" value="WBGene00006724"/>
</dbReference>
<dbReference type="EnsemblMetazoa" id="C08B11.7.2">
    <property type="protein sequence ID" value="C08B11.7.2"/>
    <property type="gene ID" value="WBGene00006724"/>
</dbReference>
<dbReference type="GeneID" id="174289"/>
<dbReference type="UCSC" id="C08B11.7">
    <property type="organism name" value="c. elegans"/>
</dbReference>
<dbReference type="AGR" id="WB:WBGene00006724"/>
<dbReference type="WormBase" id="C08B11.7">
    <property type="protein sequence ID" value="CE36913"/>
    <property type="gene ID" value="WBGene00006724"/>
    <property type="gene designation" value="ubh-4"/>
</dbReference>
<dbReference type="eggNOG" id="KOG2778">
    <property type="taxonomic scope" value="Eukaryota"/>
</dbReference>
<dbReference type="GeneTree" id="ENSGT00940000155195"/>
<dbReference type="HOGENOM" id="CLU_018316_0_1_1"/>
<dbReference type="InParanoid" id="Q09444"/>
<dbReference type="OMA" id="YIQYEIQ"/>
<dbReference type="OrthoDB" id="1924260at2759"/>
<dbReference type="PhylomeDB" id="Q09444"/>
<dbReference type="Reactome" id="R-CEL-5689603">
    <property type="pathway name" value="UCH proteinases"/>
</dbReference>
<dbReference type="PRO" id="PR:Q09444"/>
<dbReference type="Proteomes" id="UP000001940">
    <property type="component" value="Chromosome II"/>
</dbReference>
<dbReference type="Bgee" id="WBGene00006724">
    <property type="expression patterns" value="Expressed in germ line (C elegans) and 4 other cell types or tissues"/>
</dbReference>
<dbReference type="GO" id="GO:0005737">
    <property type="term" value="C:cytoplasm"/>
    <property type="evidence" value="ECO:0000318"/>
    <property type="project" value="GO_Central"/>
</dbReference>
<dbReference type="GO" id="GO:0004843">
    <property type="term" value="F:cysteine-type deubiquitinase activity"/>
    <property type="evidence" value="ECO:0000315"/>
    <property type="project" value="UniProtKB"/>
</dbReference>
<dbReference type="GO" id="GO:0032435">
    <property type="term" value="P:negative regulation of proteasomal ubiquitin-dependent protein catabolic process"/>
    <property type="evidence" value="ECO:0000315"/>
    <property type="project" value="UniProtKB"/>
</dbReference>
<dbReference type="GO" id="GO:0016579">
    <property type="term" value="P:protein deubiquitination"/>
    <property type="evidence" value="ECO:0000315"/>
    <property type="project" value="UniProtKB"/>
</dbReference>
<dbReference type="GO" id="GO:0033044">
    <property type="term" value="P:regulation of chromosome organization"/>
    <property type="evidence" value="ECO:0000318"/>
    <property type="project" value="GO_Central"/>
</dbReference>
<dbReference type="GO" id="GO:0006511">
    <property type="term" value="P:ubiquitin-dependent protein catabolic process"/>
    <property type="evidence" value="ECO:0007669"/>
    <property type="project" value="InterPro"/>
</dbReference>
<dbReference type="CDD" id="cd09617">
    <property type="entry name" value="Peptidase_C12_UCH37_BAP1"/>
    <property type="match status" value="1"/>
</dbReference>
<dbReference type="FunFam" id="3.40.532.10:FF:000009">
    <property type="entry name" value="Ubiquitin carboxyl-terminal hydrolase"/>
    <property type="match status" value="1"/>
</dbReference>
<dbReference type="Gene3D" id="3.40.532.10">
    <property type="entry name" value="Peptidase C12, ubiquitin carboxyl-terminal hydrolase"/>
    <property type="match status" value="1"/>
</dbReference>
<dbReference type="InterPro" id="IPR038765">
    <property type="entry name" value="Papain-like_cys_pep_sf"/>
</dbReference>
<dbReference type="InterPro" id="IPR001578">
    <property type="entry name" value="Peptidase_C12_UCH"/>
</dbReference>
<dbReference type="InterPro" id="IPR036959">
    <property type="entry name" value="Peptidase_C12_UCH_sf"/>
</dbReference>
<dbReference type="InterPro" id="IPR017390">
    <property type="entry name" value="Ubiquitinyl_hydrolase_UCH37"/>
</dbReference>
<dbReference type="InterPro" id="IPR041507">
    <property type="entry name" value="UCH_C"/>
</dbReference>
<dbReference type="PANTHER" id="PTHR10589">
    <property type="entry name" value="UBIQUITIN CARBOXYL-TERMINAL HYDROLASE"/>
    <property type="match status" value="1"/>
</dbReference>
<dbReference type="PANTHER" id="PTHR10589:SF16">
    <property type="entry name" value="UBIQUITIN CARBOXYL-TERMINAL HYDROLASE ISOZYME L5"/>
    <property type="match status" value="1"/>
</dbReference>
<dbReference type="Pfam" id="PF01088">
    <property type="entry name" value="Peptidase_C12"/>
    <property type="match status" value="1"/>
</dbReference>
<dbReference type="Pfam" id="PF18031">
    <property type="entry name" value="UCH_C"/>
    <property type="match status" value="1"/>
</dbReference>
<dbReference type="PIRSF" id="PIRSF038120">
    <property type="entry name" value="Ubiquitinyl_hydrolase_UCH37"/>
    <property type="match status" value="1"/>
</dbReference>
<dbReference type="PRINTS" id="PR00707">
    <property type="entry name" value="UBCTHYDRLASE"/>
</dbReference>
<dbReference type="SUPFAM" id="SSF54001">
    <property type="entry name" value="Cysteine proteinases"/>
    <property type="match status" value="1"/>
</dbReference>
<dbReference type="PROSITE" id="PS52048">
    <property type="entry name" value="UCH_DOMAIN"/>
    <property type="match status" value="1"/>
</dbReference>
<dbReference type="PROSITE" id="PS52049">
    <property type="entry name" value="ULD"/>
    <property type="match status" value="1"/>
</dbReference>
<proteinExistence type="evidence at protein level"/>
<feature type="chain" id="PRO_0000211071" description="Ubiquitin carboxyl-terminal hydrolase ubh-4">
    <location>
        <begin position="1"/>
        <end position="321"/>
    </location>
</feature>
<feature type="domain" description="UCH catalytic" evidence="1">
    <location>
        <begin position="6"/>
        <end position="220"/>
    </location>
</feature>
<feature type="domain" description="ULD" evidence="2">
    <location>
        <begin position="273"/>
        <end position="301"/>
    </location>
</feature>
<feature type="active site" description="Nucleophile" evidence="1">
    <location>
        <position position="83"/>
    </location>
</feature>
<feature type="active site" description="Proton donor" evidence="1">
    <location>
        <position position="158"/>
    </location>
</feature>
<feature type="site" description="Transition state stabilizer" evidence="1">
    <location>
        <position position="77"/>
    </location>
</feature>
<feature type="site" description="Important for enzyme activity" evidence="1">
    <location>
        <position position="173"/>
    </location>
</feature>
<organism>
    <name type="scientific">Caenorhabditis elegans</name>
    <dbReference type="NCBI Taxonomy" id="6239"/>
    <lineage>
        <taxon>Eukaryota</taxon>
        <taxon>Metazoa</taxon>
        <taxon>Ecdysozoa</taxon>
        <taxon>Nematoda</taxon>
        <taxon>Chromadorea</taxon>
        <taxon>Rhabditida</taxon>
        <taxon>Rhabditina</taxon>
        <taxon>Rhabditomorpha</taxon>
        <taxon>Rhabditoidea</taxon>
        <taxon>Rhabditidae</taxon>
        <taxon>Peloderinae</taxon>
        <taxon>Caenorhabditis</taxon>
    </lineage>
</organism>
<accession>Q09444</accession>
<gene>
    <name evidence="6" type="primary">ubh-4</name>
    <name evidence="6" type="ORF">C08B11.7</name>
</gene>
<name>UBH4_CAEEL</name>
<reference key="1">
    <citation type="journal article" date="1998" name="Science">
        <title>Genome sequence of the nematode C. elegans: a platform for investigating biology.</title>
        <authorList>
            <consortium name="The C. elegans sequencing consortium"/>
        </authorList>
    </citation>
    <scope>NUCLEOTIDE SEQUENCE [LARGE SCALE GENOMIC DNA]</scope>
    <source>
        <strain>Bristol N2</strain>
    </source>
</reference>
<reference key="2">
    <citation type="journal article" date="2013" name="Cell Rep.">
        <title>Insulin/IGF-1 signaling regulates proteasome activity through the deubiquitinating enzyme UBH-4.</title>
        <authorList>
            <person name="Matilainen O."/>
            <person name="Arpalahti L."/>
            <person name="Rantanen V."/>
            <person name="Hautaniemi S."/>
            <person name="Holmberg C.I."/>
        </authorList>
    </citation>
    <scope>FUNCTION</scope>
    <scope>CATALYTIC ACTIVITY</scope>
    <scope>INTERACTION WITH RPN-13</scope>
    <scope>TISSUE SPECIFICITY</scope>
    <scope>INDUCTION</scope>
    <scope>DISRUPTION PHENOTYPE</scope>
</reference>
<protein>
    <recommendedName>
        <fullName evidence="4">Ubiquitin carboxyl-terminal hydrolase ubh-4</fullName>
        <ecNumber evidence="5">3.4.19.12</ecNumber>
    </recommendedName>
    <alternativeName>
        <fullName evidence="6">Ubiquitin C-terminal hydrolase family 1 member 4</fullName>
    </alternativeName>
    <alternativeName>
        <fullName evidence="4">Ubiquitin thioesterase 4</fullName>
    </alternativeName>
</protein>
<keyword id="KW-0378">Hydrolase</keyword>
<keyword id="KW-0645">Protease</keyword>
<keyword id="KW-1185">Reference proteome</keyword>
<keyword id="KW-0788">Thiol protease</keyword>
<keyword id="KW-0833">Ubl conjugation pathway</keyword>
<evidence type="ECO:0000255" key="1">
    <source>
        <dbReference type="PROSITE-ProRule" id="PRU01393"/>
    </source>
</evidence>
<evidence type="ECO:0000255" key="2">
    <source>
        <dbReference type="PROSITE-ProRule" id="PRU01394"/>
    </source>
</evidence>
<evidence type="ECO:0000269" key="3">
    <source>
    </source>
</evidence>
<evidence type="ECO:0000305" key="4"/>
<evidence type="ECO:0000305" key="5">
    <source>
    </source>
</evidence>
<evidence type="ECO:0000312" key="6">
    <source>
        <dbReference type="WormBase" id="C08B11.7"/>
    </source>
</evidence>
<sequence length="321" mass="37120">MTDAGSWCLIESDPGVFTEMLRGFGVDGLQVEELYSLDDDKAMTRPTYGLIFLFKWRQGDETTGIPSDKQNIFFAHQTIQNACATQALINLLMNVEDTDVKLGNILNQYKEFAIDLDPNTRGHCLSNSEEIRTVHNSFSRQTLFELDIKGGESEDNYHFVTYVPIGNKVYELDGLRELPLEVAEFQKEQDWIEAIKPVIQQRMQKYSEGEITFNLMALVPNRKQKLQEMMENLIQANENNELEEQIADLNKAIADEDYKMEMYRKENNRRRHNYTPFVIELMKILAKEGKLVGLVDNAYQAAKEKSKLNTDITKLELKRKQ</sequence>
<comment type="function">
    <text evidence="5">Ubiquitin-protein hydrolase involved both in the processing of ubiquitin precursors and of ubiquitinated proteins. This enzyme is a thiol protease that recognizes and hydrolyzes a peptide bond at the C-terminal glycine of ubiquitin.</text>
</comment>
<comment type="catalytic activity">
    <reaction evidence="5">
        <text>Thiol-dependent hydrolysis of ester, thioester, amide, peptide and isopeptide bonds formed by the C-terminal Gly of ubiquitin (a 76-residue protein attached to proteins as an intracellular targeting signal).</text>
        <dbReference type="EC" id="3.4.19.12"/>
    </reaction>
</comment>
<comment type="subunit">
    <text evidence="3">Interacts with proteasome 19S subunit rpn-13.</text>
</comment>
<comment type="tissue specificity">
    <text evidence="3">Highly expressed in intestine and to a lesser extent in other tissues including muscles and neurons.</text>
</comment>
<comment type="induction">
    <text evidence="3">Expression decreases with age.</text>
</comment>
<comment type="disruption phenotype">
    <text evidence="3">RNAi-mediated knockdown causes a slight decrease in lifespan and in brood size. Enhanced proteasome activity, specifically in the intestine.</text>
</comment>
<comment type="similarity">
    <text evidence="4">Belongs to the peptidase C12 family.</text>
</comment>